<sequence length="253" mass="30306">MYFDEEQLLKYTIYAYRLSFFVGICSLFIAKSCLPEFLQYGKTYRPKENSKYSSILERIKKFTVPKAYFSHFYYLATFLSLVTLYFYPKFPIVWIIFGHSLRRLYETLYVLHYTSNSRMNWSHYLVGIWFYSVLLLILNISLYKNSIPNTLNMNAFIIFCIASWDQYKNHVILANLVKYSLPTGRLFRLVCCPHYLDEIIIYSTLLPYEQEFYLTLVWVITSLTISALETKNYYRHKFKDNHVAPYAIIPFII</sequence>
<accession>P40526</accession>
<accession>D6VVN2</accession>
<protein>
    <recommendedName>
        <fullName evidence="7">Polyprenal reductase</fullName>
        <ecNumber evidence="4">1.3.1.94</ecNumber>
    </recommendedName>
</protein>
<dbReference type="EC" id="1.3.1.94" evidence="4"/>
<dbReference type="EMBL" id="Z38060">
    <property type="protein sequence ID" value="CAA86173.1"/>
    <property type="molecule type" value="Genomic_DNA"/>
</dbReference>
<dbReference type="EMBL" id="BK006942">
    <property type="protein sequence ID" value="DAA08498.1"/>
    <property type="molecule type" value="Genomic_DNA"/>
</dbReference>
<dbReference type="PIR" id="S48430">
    <property type="entry name" value="S48430"/>
</dbReference>
<dbReference type="RefSeq" id="NP_012215.1">
    <property type="nucleotide sequence ID" value="NM_001179399.1"/>
</dbReference>
<dbReference type="SMR" id="P40526"/>
<dbReference type="BioGRID" id="34941">
    <property type="interactions" value="115"/>
</dbReference>
<dbReference type="DIP" id="DIP-4658N"/>
<dbReference type="FunCoup" id="P40526">
    <property type="interactions" value="451"/>
</dbReference>
<dbReference type="STRING" id="4932.YIL049W"/>
<dbReference type="PaxDb" id="4932-YIL049W"/>
<dbReference type="PeptideAtlas" id="P40526"/>
<dbReference type="EnsemblFungi" id="YIL049W_mRNA">
    <property type="protein sequence ID" value="YIL049W"/>
    <property type="gene ID" value="YIL049W"/>
</dbReference>
<dbReference type="GeneID" id="854762"/>
<dbReference type="KEGG" id="sce:YIL049W"/>
<dbReference type="AGR" id="SGD:S000001311"/>
<dbReference type="SGD" id="S000001311">
    <property type="gene designation" value="DFG10"/>
</dbReference>
<dbReference type="VEuPathDB" id="FungiDB:YIL049W"/>
<dbReference type="eggNOG" id="KOG1640">
    <property type="taxonomic scope" value="Eukaryota"/>
</dbReference>
<dbReference type="GeneTree" id="ENSGT00500000044920"/>
<dbReference type="HOGENOM" id="CLU_044409_0_0_1"/>
<dbReference type="InParanoid" id="P40526"/>
<dbReference type="OMA" id="RFYETNF"/>
<dbReference type="OrthoDB" id="541710at2759"/>
<dbReference type="BioCyc" id="MetaCyc:G3O-31320-MONOMER"/>
<dbReference type="BioCyc" id="YEAST:G3O-31320-MONOMER"/>
<dbReference type="Reactome" id="R-SCE-193048">
    <property type="pathway name" value="Androgen biosynthesis"/>
</dbReference>
<dbReference type="Reactome" id="R-SCE-446199">
    <property type="pathway name" value="Synthesis of Dolichyl-phosphate"/>
</dbReference>
<dbReference type="UniPathway" id="UPA00378"/>
<dbReference type="BioGRID-ORCS" id="854762">
    <property type="hits" value="0 hits in 10 CRISPR screens"/>
</dbReference>
<dbReference type="PRO" id="PR:P40526"/>
<dbReference type="Proteomes" id="UP000002311">
    <property type="component" value="Chromosome IX"/>
</dbReference>
<dbReference type="RNAct" id="P40526">
    <property type="molecule type" value="protein"/>
</dbReference>
<dbReference type="GO" id="GO:0005783">
    <property type="term" value="C:endoplasmic reticulum"/>
    <property type="evidence" value="ECO:0007005"/>
    <property type="project" value="SGD"/>
</dbReference>
<dbReference type="GO" id="GO:0005789">
    <property type="term" value="C:endoplasmic reticulum membrane"/>
    <property type="evidence" value="ECO:0007669"/>
    <property type="project" value="UniProtKB-SubCell"/>
</dbReference>
<dbReference type="GO" id="GO:0003865">
    <property type="term" value="F:3-oxo-5-alpha-steroid 4-dehydrogenase activity"/>
    <property type="evidence" value="ECO:0000250"/>
    <property type="project" value="SGD"/>
</dbReference>
<dbReference type="GO" id="GO:0160198">
    <property type="term" value="F:polyprenal reductase activity"/>
    <property type="evidence" value="ECO:0000314"/>
    <property type="project" value="UniProtKB"/>
</dbReference>
<dbReference type="GO" id="GO:0102389">
    <property type="term" value="F:polyprenol reductase activity"/>
    <property type="evidence" value="ECO:0000318"/>
    <property type="project" value="GO_Central"/>
</dbReference>
<dbReference type="GO" id="GO:0019408">
    <property type="term" value="P:dolichol biosynthetic process"/>
    <property type="evidence" value="ECO:0000314"/>
    <property type="project" value="UniProtKB"/>
</dbReference>
<dbReference type="GO" id="GO:0019348">
    <property type="term" value="P:dolichol metabolic process"/>
    <property type="evidence" value="ECO:0000315"/>
    <property type="project" value="UniProtKB"/>
</dbReference>
<dbReference type="GO" id="GO:0006488">
    <property type="term" value="P:dolichol-linked oligosaccharide biosynthetic process"/>
    <property type="evidence" value="ECO:0000315"/>
    <property type="project" value="UniProtKB"/>
</dbReference>
<dbReference type="GO" id="GO:0016095">
    <property type="term" value="P:polyprenol catabolic process"/>
    <property type="evidence" value="ECO:0000315"/>
    <property type="project" value="UniProtKB"/>
</dbReference>
<dbReference type="GO" id="GO:0007124">
    <property type="term" value="P:pseudohyphal growth"/>
    <property type="evidence" value="ECO:0000315"/>
    <property type="project" value="SGD"/>
</dbReference>
<dbReference type="InterPro" id="IPR001104">
    <property type="entry name" value="3-oxo-5_a-steroid_4-DH_C"/>
</dbReference>
<dbReference type="InterPro" id="IPR039698">
    <property type="entry name" value="Dfg10/SRD5A3"/>
</dbReference>
<dbReference type="PANTHER" id="PTHR14624">
    <property type="entry name" value="DFG10 PROTEIN"/>
    <property type="match status" value="1"/>
</dbReference>
<dbReference type="PANTHER" id="PTHR14624:SF0">
    <property type="entry name" value="POLYPRENOL REDUCTASE"/>
    <property type="match status" value="1"/>
</dbReference>
<dbReference type="Pfam" id="PF02544">
    <property type="entry name" value="Steroid_dh"/>
    <property type="match status" value="1"/>
</dbReference>
<dbReference type="PROSITE" id="PS50244">
    <property type="entry name" value="S5A_REDUCTASE"/>
    <property type="match status" value="1"/>
</dbReference>
<keyword id="KW-0256">Endoplasmic reticulum</keyword>
<keyword id="KW-0472">Membrane</keyword>
<keyword id="KW-0521">NADP</keyword>
<keyword id="KW-0560">Oxidoreductase</keyword>
<keyword id="KW-1185">Reference proteome</keyword>
<keyword id="KW-0812">Transmembrane</keyword>
<keyword id="KW-1133">Transmembrane helix</keyword>
<evidence type="ECO:0000250" key="1">
    <source>
        <dbReference type="UniProtKB" id="Q9H8P0"/>
    </source>
</evidence>
<evidence type="ECO:0000255" key="2"/>
<evidence type="ECO:0000269" key="3">
    <source>
    </source>
</evidence>
<evidence type="ECO:0000269" key="4">
    <source>
    </source>
</evidence>
<evidence type="ECO:0000269" key="5">
    <source>
    </source>
</evidence>
<evidence type="ECO:0000303" key="6">
    <source>
    </source>
</evidence>
<evidence type="ECO:0000305" key="7"/>
<evidence type="ECO:0000312" key="8">
    <source>
        <dbReference type="SGD" id="S000001311"/>
    </source>
</evidence>
<reference key="1">
    <citation type="journal article" date="1997" name="Nature">
        <title>The nucleotide sequence of Saccharomyces cerevisiae chromosome IX.</title>
        <authorList>
            <person name="Churcher C.M."/>
            <person name="Bowman S."/>
            <person name="Badcock K."/>
            <person name="Bankier A.T."/>
            <person name="Brown D."/>
            <person name="Chillingworth T."/>
            <person name="Connor R."/>
            <person name="Devlin K."/>
            <person name="Gentles S."/>
            <person name="Hamlin N."/>
            <person name="Harris D.E."/>
            <person name="Horsnell T."/>
            <person name="Hunt S."/>
            <person name="Jagels K."/>
            <person name="Jones M."/>
            <person name="Lye G."/>
            <person name="Moule S."/>
            <person name="Odell C."/>
            <person name="Pearson D."/>
            <person name="Rajandream M.A."/>
            <person name="Rice P."/>
            <person name="Rowley N."/>
            <person name="Skelton J."/>
            <person name="Smith V."/>
            <person name="Walsh S.V."/>
            <person name="Whitehead S."/>
            <person name="Barrell B.G."/>
        </authorList>
    </citation>
    <scope>NUCLEOTIDE SEQUENCE [LARGE SCALE GENOMIC DNA]</scope>
    <source>
        <strain>ATCC 204508 / S288c</strain>
    </source>
</reference>
<reference key="2">
    <citation type="journal article" date="2014" name="G3 (Bethesda)">
        <title>The reference genome sequence of Saccharomyces cerevisiae: Then and now.</title>
        <authorList>
            <person name="Engel S.R."/>
            <person name="Dietrich F.S."/>
            <person name="Fisk D.G."/>
            <person name="Binkley G."/>
            <person name="Balakrishnan R."/>
            <person name="Costanzo M.C."/>
            <person name="Dwight S.S."/>
            <person name="Hitz B.C."/>
            <person name="Karra K."/>
            <person name="Nash R.S."/>
            <person name="Weng S."/>
            <person name="Wong E.D."/>
            <person name="Lloyd P."/>
            <person name="Skrzypek M.S."/>
            <person name="Miyasato S.R."/>
            <person name="Simison M."/>
            <person name="Cherry J.M."/>
        </authorList>
    </citation>
    <scope>GENOME REANNOTATION</scope>
    <source>
        <strain>ATCC 204508 / S288c</strain>
    </source>
</reference>
<reference key="3">
    <citation type="journal article" date="1997" name="Genetics">
        <title>Dissection of filamentous growth by transposon mutagenesis in Saccharomyces cerevisiae.</title>
        <authorList>
            <person name="Moesch H.-U."/>
            <person name="Fink G.R."/>
        </authorList>
    </citation>
    <scope>GENE NAME</scope>
    <scope>DISRUPTION PHENOTYPE</scope>
</reference>
<reference key="4">
    <citation type="journal article" date="2010" name="Cell">
        <title>SRD5A3 is required for converting polyprenol to dolichol and is mutated in a congenital glycosylation disorder.</title>
        <authorList>
            <person name="Cantagrel V."/>
            <person name="Lefeber D.J."/>
            <person name="Ng B.G."/>
            <person name="Guan Z."/>
            <person name="Silhavy J.L."/>
            <person name="Bielas S.L."/>
            <person name="Lehle L."/>
            <person name="Hombauer H."/>
            <person name="Adamowicz M."/>
            <person name="Swiezewska E."/>
            <person name="De Brouwer A.P."/>
            <person name="Blumel P."/>
            <person name="Sykut-Cegielska J."/>
            <person name="Houliston S."/>
            <person name="Swistun D."/>
            <person name="Ali B.R."/>
            <person name="Dobyns W.B."/>
            <person name="Babovic-Vuksanovic D."/>
            <person name="van Bokhoven H."/>
            <person name="Wevers R.A."/>
            <person name="Raetz C.R."/>
            <person name="Freeze H.H."/>
            <person name="Morava E."/>
            <person name="Al-Gazali L."/>
            <person name="Gleeson J.G."/>
        </authorList>
    </citation>
    <scope>FUNCTION</scope>
    <scope>DISRUPTION PHENOTYPE</scope>
</reference>
<reference key="5">
    <citation type="journal article" date="2024" name="Cell">
        <title>A pseudoautosomal glycosylation disorder prompts the revision of dolichol biosynthesis.</title>
        <authorList>
            <person name="Wilson M.P."/>
            <person name="Kentache T."/>
            <person name="Althoff C.R."/>
            <person name="Schulz C."/>
            <person name="de Bettignies G."/>
            <person name="Mateu Cabrera G."/>
            <person name="Cimbalistiene L."/>
            <person name="Burnyte B."/>
            <person name="Yoon G."/>
            <person name="Costain G."/>
            <person name="Vuillaumier-Barrot S."/>
            <person name="Cheillan D."/>
            <person name="Rymen D."/>
            <person name="Rychtarova L."/>
            <person name="Hansikova H."/>
            <person name="Bury M."/>
            <person name="Dewulf J.P."/>
            <person name="Caligiore F."/>
            <person name="Jaeken J."/>
            <person name="Cantagrel V."/>
            <person name="Van Schaftingen E."/>
            <person name="Matthijs G."/>
            <person name="Foulquier F."/>
            <person name="Bommer G.T."/>
        </authorList>
    </citation>
    <scope>FUNCTION</scope>
    <scope>CATALYTIC ACTIVITY</scope>
    <scope>PATHWAY</scope>
</reference>
<name>DFG10_YEAST</name>
<comment type="function">
    <text evidence="3 4">Plays a key role in early steps of protein N-linked glycosylation by being involved in the conversion of polyprenol into dolichol (PubMed:20637498, PubMed:38821050). Acts as a polyprenal reductase that mediates the reduction of polyprenal into dolichal in a NADP-dependent mechanism (PubMed:38821050). Dolichols are required for the synthesis of dolichol-linked monosaccharides and the oligosaccharide precursor used for N-glycosylation (PubMed:20637498, PubMed:38821050).</text>
</comment>
<comment type="catalytic activity">
    <reaction evidence="4">
        <text>a di-trans,poly-cis-dolichal + NADP(+) = a di-trans,poly-cis-polyprenal + NADPH + H(+)</text>
        <dbReference type="Rhea" id="RHEA:80727"/>
        <dbReference type="Rhea" id="RHEA-COMP:19536"/>
        <dbReference type="Rhea" id="RHEA-COMP:19537"/>
        <dbReference type="ChEBI" id="CHEBI:15378"/>
        <dbReference type="ChEBI" id="CHEBI:57783"/>
        <dbReference type="ChEBI" id="CHEBI:58349"/>
        <dbReference type="ChEBI" id="CHEBI:231623"/>
        <dbReference type="ChEBI" id="CHEBI:231637"/>
        <dbReference type="EC" id="1.3.1.94"/>
    </reaction>
    <physiologicalReaction direction="right-to-left" evidence="4">
        <dbReference type="Rhea" id="RHEA:80729"/>
    </physiologicalReaction>
</comment>
<comment type="pathway">
    <text evidence="3 4">Protein modification; protein glycosylation.</text>
</comment>
<comment type="subcellular location">
    <subcellularLocation>
        <location evidence="1">Endoplasmic reticulum membrane</location>
        <topology evidence="2">Multi-pass membrane protein</topology>
    </subcellularLocation>
</comment>
<comment type="disruption phenotype">
    <text evidence="3 5">Suppression of filamentatous growth, defects in cell polarity, and cellular elongation, due to defects in N-glycosylation.</text>
</comment>
<comment type="similarity">
    <text evidence="7">Belongs to the steroid 5-alpha reductase family. Polyprenal reductase subfamily.</text>
</comment>
<comment type="caution">
    <text evidence="3 4">Was initially characterized as a polyprenol reductase, mediating the conversion of polyprenol into dolichol (PubMed:20637498). However, it was later shown to catalyze an intermediate step in this pathway and reduce polyprenal (PubMed:38821050).</text>
</comment>
<gene>
    <name evidence="6 8" type="primary">DFG10</name>
    <name type="ordered locus">YIL049W</name>
</gene>
<feature type="chain" id="PRO_0000213682" description="Polyprenal reductase">
    <location>
        <begin position="1"/>
        <end position="253"/>
    </location>
</feature>
<feature type="transmembrane region" description="Helical" evidence="2">
    <location>
        <begin position="18"/>
        <end position="38"/>
    </location>
</feature>
<feature type="transmembrane region" description="Helical" evidence="2">
    <location>
        <begin position="78"/>
        <end position="98"/>
    </location>
</feature>
<feature type="transmembrane region" description="Helical" evidence="2">
    <location>
        <begin position="123"/>
        <end position="143"/>
    </location>
</feature>
<feature type="transmembrane region" description="Helical" evidence="2">
    <location>
        <begin position="200"/>
        <end position="220"/>
    </location>
</feature>
<proteinExistence type="evidence at protein level"/>
<organism>
    <name type="scientific">Saccharomyces cerevisiae (strain ATCC 204508 / S288c)</name>
    <name type="common">Baker's yeast</name>
    <dbReference type="NCBI Taxonomy" id="559292"/>
    <lineage>
        <taxon>Eukaryota</taxon>
        <taxon>Fungi</taxon>
        <taxon>Dikarya</taxon>
        <taxon>Ascomycota</taxon>
        <taxon>Saccharomycotina</taxon>
        <taxon>Saccharomycetes</taxon>
        <taxon>Saccharomycetales</taxon>
        <taxon>Saccharomycetaceae</taxon>
        <taxon>Saccharomyces</taxon>
    </lineage>
</organism>